<name>CRL_SALPA</name>
<keyword id="KW-0010">Activator</keyword>
<keyword id="KW-0175">Coiled coil</keyword>
<keyword id="KW-0963">Cytoplasm</keyword>
<keyword id="KW-0804">Transcription</keyword>
<keyword id="KW-0805">Transcription regulation</keyword>
<feature type="chain" id="PRO_0000268902" description="Sigma factor-binding protein Crl">
    <location>
        <begin position="1"/>
        <end position="133"/>
    </location>
</feature>
<feature type="region of interest" description="Essential for activity" evidence="1">
    <location>
        <begin position="99"/>
        <end position="122"/>
    </location>
</feature>
<feature type="coiled-coil region" evidence="1">
    <location>
        <begin position="90"/>
        <end position="111"/>
    </location>
</feature>
<gene>
    <name evidence="1" type="primary">crl</name>
    <name type="ordered locus">SPA2436</name>
</gene>
<evidence type="ECO:0000255" key="1">
    <source>
        <dbReference type="HAMAP-Rule" id="MF_01178"/>
    </source>
</evidence>
<proteinExistence type="inferred from homology"/>
<sequence length="133" mass="15797">MTLPSGHPKSRLIKKFTALGPYIREGQCEDNRFFFDCLAVCVNVKPAPEKREFWGWWMELEAQEKRFTYRYQFGLFDKEGNWTVVPINETEVVERLEYTLREFHEKLRDLLISMELALEPSDDFNDEPVKLSA</sequence>
<protein>
    <recommendedName>
        <fullName evidence="1">Sigma factor-binding protein Crl</fullName>
    </recommendedName>
</protein>
<comment type="function">
    <text evidence="1">Binds to the sigma-S subunit of RNA polymerase, activating expression of sigma-S-regulated genes. Stimulates RNA polymerase holoenzyme formation and may bind to several other sigma factors, such as sigma-70 and sigma-32.</text>
</comment>
<comment type="subcellular location">
    <subcellularLocation>
        <location evidence="1">Cytoplasm</location>
    </subcellularLocation>
</comment>
<comment type="similarity">
    <text evidence="1">Belongs to the Crl family.</text>
</comment>
<dbReference type="EMBL" id="CP000026">
    <property type="protein sequence ID" value="AAV78316.1"/>
    <property type="molecule type" value="Genomic_DNA"/>
</dbReference>
<dbReference type="RefSeq" id="WP_000174696.1">
    <property type="nucleotide sequence ID" value="NC_006511.1"/>
</dbReference>
<dbReference type="SMR" id="Q5PF66"/>
<dbReference type="KEGG" id="spt:SPA2436"/>
<dbReference type="HOGENOM" id="CLU_136773_0_0_6"/>
<dbReference type="Proteomes" id="UP000008185">
    <property type="component" value="Chromosome"/>
</dbReference>
<dbReference type="GO" id="GO:0005737">
    <property type="term" value="C:cytoplasm"/>
    <property type="evidence" value="ECO:0007669"/>
    <property type="project" value="UniProtKB-SubCell"/>
</dbReference>
<dbReference type="GO" id="GO:0045893">
    <property type="term" value="P:positive regulation of DNA-templated transcription"/>
    <property type="evidence" value="ECO:0007669"/>
    <property type="project" value="UniProtKB-UniRule"/>
</dbReference>
<dbReference type="Gene3D" id="3.30.310.230">
    <property type="entry name" value="Sigma factor-binding protein Crl monomer"/>
    <property type="match status" value="1"/>
</dbReference>
<dbReference type="HAMAP" id="MF_01178">
    <property type="entry name" value="Crl"/>
    <property type="match status" value="1"/>
</dbReference>
<dbReference type="InterPro" id="IPR009986">
    <property type="entry name" value="Tscrpt_reg_Crl"/>
</dbReference>
<dbReference type="InterPro" id="IPR038208">
    <property type="entry name" value="Tscrpt_reg_Crl_sf"/>
</dbReference>
<dbReference type="NCBIfam" id="NF008217">
    <property type="entry name" value="PRK10984.1"/>
    <property type="match status" value="1"/>
</dbReference>
<dbReference type="Pfam" id="PF07417">
    <property type="entry name" value="Crl"/>
    <property type="match status" value="1"/>
</dbReference>
<reference key="1">
    <citation type="journal article" date="2004" name="Nat. Genet.">
        <title>Comparison of genome degradation in Paratyphi A and Typhi, human-restricted serovars of Salmonella enterica that cause typhoid.</title>
        <authorList>
            <person name="McClelland M."/>
            <person name="Sanderson K.E."/>
            <person name="Clifton S.W."/>
            <person name="Latreille P."/>
            <person name="Porwollik S."/>
            <person name="Sabo A."/>
            <person name="Meyer R."/>
            <person name="Bieri T."/>
            <person name="Ozersky P."/>
            <person name="McLellan M."/>
            <person name="Harkins C.R."/>
            <person name="Wang C."/>
            <person name="Nguyen C."/>
            <person name="Berghoff A."/>
            <person name="Elliott G."/>
            <person name="Kohlberg S."/>
            <person name="Strong C."/>
            <person name="Du F."/>
            <person name="Carter J."/>
            <person name="Kremizki C."/>
            <person name="Layman D."/>
            <person name="Leonard S."/>
            <person name="Sun H."/>
            <person name="Fulton L."/>
            <person name="Nash W."/>
            <person name="Miner T."/>
            <person name="Minx P."/>
            <person name="Delehaunty K."/>
            <person name="Fronick C."/>
            <person name="Magrini V."/>
            <person name="Nhan M."/>
            <person name="Warren W."/>
            <person name="Florea L."/>
            <person name="Spieth J."/>
            <person name="Wilson R.K."/>
        </authorList>
    </citation>
    <scope>NUCLEOTIDE SEQUENCE [LARGE SCALE GENOMIC DNA]</scope>
    <source>
        <strain>ATCC 9150 / SARB42</strain>
    </source>
</reference>
<organism>
    <name type="scientific">Salmonella paratyphi A (strain ATCC 9150 / SARB42)</name>
    <dbReference type="NCBI Taxonomy" id="295319"/>
    <lineage>
        <taxon>Bacteria</taxon>
        <taxon>Pseudomonadati</taxon>
        <taxon>Pseudomonadota</taxon>
        <taxon>Gammaproteobacteria</taxon>
        <taxon>Enterobacterales</taxon>
        <taxon>Enterobacteriaceae</taxon>
        <taxon>Salmonella</taxon>
    </lineage>
</organism>
<accession>Q5PF66</accession>